<organism>
    <name type="scientific">Shigella dysenteriae serotype 1 (strain Sd197)</name>
    <dbReference type="NCBI Taxonomy" id="300267"/>
    <lineage>
        <taxon>Bacteria</taxon>
        <taxon>Pseudomonadati</taxon>
        <taxon>Pseudomonadota</taxon>
        <taxon>Gammaproteobacteria</taxon>
        <taxon>Enterobacterales</taxon>
        <taxon>Enterobacteriaceae</taxon>
        <taxon>Shigella</taxon>
    </lineage>
</organism>
<accession>Q32JL2</accession>
<feature type="chain" id="PRO_1000025091" description="UDP-2,3-diacylglucosamine hydrolase">
    <location>
        <begin position="1"/>
        <end position="240"/>
    </location>
</feature>
<feature type="binding site" evidence="1">
    <location>
        <position position="8"/>
    </location>
    <ligand>
        <name>Mn(2+)</name>
        <dbReference type="ChEBI" id="CHEBI:29035"/>
        <label>1</label>
    </ligand>
</feature>
<feature type="binding site" evidence="1">
    <location>
        <position position="10"/>
    </location>
    <ligand>
        <name>Mn(2+)</name>
        <dbReference type="ChEBI" id="CHEBI:29035"/>
        <label>1</label>
    </ligand>
</feature>
<feature type="binding site" evidence="1">
    <location>
        <position position="41"/>
    </location>
    <ligand>
        <name>Mn(2+)</name>
        <dbReference type="ChEBI" id="CHEBI:29035"/>
        <label>1</label>
    </ligand>
</feature>
<feature type="binding site" evidence="1">
    <location>
        <position position="41"/>
    </location>
    <ligand>
        <name>Mn(2+)</name>
        <dbReference type="ChEBI" id="CHEBI:29035"/>
        <label>2</label>
    </ligand>
</feature>
<feature type="binding site" evidence="1">
    <location>
        <begin position="79"/>
        <end position="80"/>
    </location>
    <ligand>
        <name>substrate</name>
    </ligand>
</feature>
<feature type="binding site" evidence="1">
    <location>
        <position position="79"/>
    </location>
    <ligand>
        <name>Mn(2+)</name>
        <dbReference type="ChEBI" id="CHEBI:29035"/>
        <label>2</label>
    </ligand>
</feature>
<feature type="binding site" evidence="1">
    <location>
        <position position="114"/>
    </location>
    <ligand>
        <name>Mn(2+)</name>
        <dbReference type="ChEBI" id="CHEBI:29035"/>
        <label>2</label>
    </ligand>
</feature>
<feature type="binding site" evidence="1">
    <location>
        <position position="122"/>
    </location>
    <ligand>
        <name>substrate</name>
    </ligand>
</feature>
<feature type="binding site" evidence="1">
    <location>
        <position position="160"/>
    </location>
    <ligand>
        <name>substrate</name>
    </ligand>
</feature>
<feature type="binding site" evidence="1">
    <location>
        <position position="164"/>
    </location>
    <ligand>
        <name>substrate</name>
    </ligand>
</feature>
<feature type="binding site" evidence="1">
    <location>
        <position position="167"/>
    </location>
    <ligand>
        <name>substrate</name>
    </ligand>
</feature>
<feature type="binding site" evidence="1">
    <location>
        <position position="195"/>
    </location>
    <ligand>
        <name>Mn(2+)</name>
        <dbReference type="ChEBI" id="CHEBI:29035"/>
        <label>2</label>
    </ligand>
</feature>
<feature type="binding site" evidence="1">
    <location>
        <position position="195"/>
    </location>
    <ligand>
        <name>substrate</name>
    </ligand>
</feature>
<feature type="binding site" evidence="1">
    <location>
        <position position="197"/>
    </location>
    <ligand>
        <name>Mn(2+)</name>
        <dbReference type="ChEBI" id="CHEBI:29035"/>
        <label>1</label>
    </ligand>
</feature>
<reference key="1">
    <citation type="journal article" date="2005" name="Nucleic Acids Res.">
        <title>Genome dynamics and diversity of Shigella species, the etiologic agents of bacillary dysentery.</title>
        <authorList>
            <person name="Yang F."/>
            <person name="Yang J."/>
            <person name="Zhang X."/>
            <person name="Chen L."/>
            <person name="Jiang Y."/>
            <person name="Yan Y."/>
            <person name="Tang X."/>
            <person name="Wang J."/>
            <person name="Xiong Z."/>
            <person name="Dong J."/>
            <person name="Xue Y."/>
            <person name="Zhu Y."/>
            <person name="Xu X."/>
            <person name="Sun L."/>
            <person name="Chen S."/>
            <person name="Nie H."/>
            <person name="Peng J."/>
            <person name="Xu J."/>
            <person name="Wang Y."/>
            <person name="Yuan Z."/>
            <person name="Wen Y."/>
            <person name="Yao Z."/>
            <person name="Shen Y."/>
            <person name="Qiang B."/>
            <person name="Hou Y."/>
            <person name="Yu J."/>
            <person name="Jin Q."/>
        </authorList>
    </citation>
    <scope>NUCLEOTIDE SEQUENCE [LARGE SCALE GENOMIC DNA]</scope>
    <source>
        <strain>Sd197</strain>
    </source>
</reference>
<gene>
    <name evidence="1" type="primary">lpxH</name>
    <name type="ordered locus">SDY_0276</name>
</gene>
<protein>
    <recommendedName>
        <fullName evidence="1">UDP-2,3-diacylglucosamine hydrolase</fullName>
        <ecNumber evidence="1">3.6.1.54</ecNumber>
    </recommendedName>
    <alternativeName>
        <fullName evidence="1">UDP-2,3-diacylglucosamine diphosphatase</fullName>
    </alternativeName>
</protein>
<evidence type="ECO:0000255" key="1">
    <source>
        <dbReference type="HAMAP-Rule" id="MF_00575"/>
    </source>
</evidence>
<comment type="function">
    <text evidence="1">Hydrolyzes the pyrophosphate bond of UDP-2,3-diacylglucosamine to yield 2,3-diacylglucosamine 1-phosphate (lipid X) and UMP by catalyzing the attack of water at the alpha-P atom. Involved in the biosynthesis of lipid A, a phosphorylated glycolipid that anchors the lipopolysaccharide to the outer membrane of the cell.</text>
</comment>
<comment type="catalytic activity">
    <reaction evidence="1">
        <text>UDP-2-N,3-O-bis[(3R)-3-hydroxytetradecanoyl]-alpha-D-glucosamine + H2O = 2-N,3-O-bis[(3R)-3-hydroxytetradecanoyl]-alpha-D-glucosaminyl 1-phosphate + UMP + 2 H(+)</text>
        <dbReference type="Rhea" id="RHEA:25213"/>
        <dbReference type="ChEBI" id="CHEBI:15377"/>
        <dbReference type="ChEBI" id="CHEBI:15378"/>
        <dbReference type="ChEBI" id="CHEBI:57865"/>
        <dbReference type="ChEBI" id="CHEBI:57957"/>
        <dbReference type="ChEBI" id="CHEBI:78847"/>
        <dbReference type="EC" id="3.6.1.54"/>
    </reaction>
</comment>
<comment type="cofactor">
    <cofactor evidence="1">
        <name>Mn(2+)</name>
        <dbReference type="ChEBI" id="CHEBI:29035"/>
    </cofactor>
    <text evidence="1">Binds 2 Mn(2+) ions per subunit in a binuclear metal center.</text>
</comment>
<comment type="pathway">
    <text evidence="1">Glycolipid biosynthesis; lipid IV(A) biosynthesis; lipid IV(A) from (3R)-3-hydroxytetradecanoyl-[acyl-carrier-protein] and UDP-N-acetyl-alpha-D-glucosamine: step 4/6.</text>
</comment>
<comment type="subcellular location">
    <subcellularLocation>
        <location evidence="1">Cell inner membrane</location>
        <topology evidence="1">Peripheral membrane protein</topology>
        <orientation evidence="1">Cytoplasmic side</orientation>
    </subcellularLocation>
</comment>
<comment type="similarity">
    <text evidence="1">Belongs to the LpxH family.</text>
</comment>
<dbReference type="EC" id="3.6.1.54" evidence="1"/>
<dbReference type="EMBL" id="CP000034">
    <property type="protein sequence ID" value="ABB60495.1"/>
    <property type="molecule type" value="Genomic_DNA"/>
</dbReference>
<dbReference type="RefSeq" id="WP_000212265.1">
    <property type="nucleotide sequence ID" value="NC_007606.1"/>
</dbReference>
<dbReference type="RefSeq" id="YP_401984.1">
    <property type="nucleotide sequence ID" value="NC_007606.1"/>
</dbReference>
<dbReference type="SMR" id="Q32JL2"/>
<dbReference type="STRING" id="300267.SDY_0276"/>
<dbReference type="EnsemblBacteria" id="ABB60495">
    <property type="protein sequence ID" value="ABB60495"/>
    <property type="gene ID" value="SDY_0276"/>
</dbReference>
<dbReference type="KEGG" id="sdy:SDY_0276"/>
<dbReference type="PATRIC" id="fig|300267.13.peg.316"/>
<dbReference type="HOGENOM" id="CLU_074586_0_0_6"/>
<dbReference type="UniPathway" id="UPA00359">
    <property type="reaction ID" value="UER00480"/>
</dbReference>
<dbReference type="Proteomes" id="UP000002716">
    <property type="component" value="Chromosome"/>
</dbReference>
<dbReference type="GO" id="GO:0005737">
    <property type="term" value="C:cytoplasm"/>
    <property type="evidence" value="ECO:0007669"/>
    <property type="project" value="InterPro"/>
</dbReference>
<dbReference type="GO" id="GO:0019897">
    <property type="term" value="C:extrinsic component of plasma membrane"/>
    <property type="evidence" value="ECO:0007669"/>
    <property type="project" value="UniProtKB-UniRule"/>
</dbReference>
<dbReference type="GO" id="GO:0030145">
    <property type="term" value="F:manganese ion binding"/>
    <property type="evidence" value="ECO:0007669"/>
    <property type="project" value="UniProtKB-UniRule"/>
</dbReference>
<dbReference type="GO" id="GO:0008758">
    <property type="term" value="F:UDP-2,3-diacylglucosamine hydrolase activity"/>
    <property type="evidence" value="ECO:0007669"/>
    <property type="project" value="UniProtKB-UniRule"/>
</dbReference>
<dbReference type="GO" id="GO:0009245">
    <property type="term" value="P:lipid A biosynthetic process"/>
    <property type="evidence" value="ECO:0007669"/>
    <property type="project" value="UniProtKB-UniRule"/>
</dbReference>
<dbReference type="CDD" id="cd07398">
    <property type="entry name" value="MPP_YbbF-LpxH"/>
    <property type="match status" value="1"/>
</dbReference>
<dbReference type="FunFam" id="3.60.21.10:FF:000012">
    <property type="entry name" value="UDP-2,3-diacylglucosamine hydrolase"/>
    <property type="match status" value="1"/>
</dbReference>
<dbReference type="Gene3D" id="3.60.21.10">
    <property type="match status" value="1"/>
</dbReference>
<dbReference type="HAMAP" id="MF_00575">
    <property type="entry name" value="LpxH"/>
    <property type="match status" value="1"/>
</dbReference>
<dbReference type="InterPro" id="IPR004843">
    <property type="entry name" value="Calcineurin-like_PHP_ApaH"/>
</dbReference>
<dbReference type="InterPro" id="IPR043461">
    <property type="entry name" value="LpxH-like"/>
</dbReference>
<dbReference type="InterPro" id="IPR029052">
    <property type="entry name" value="Metallo-depent_PP-like"/>
</dbReference>
<dbReference type="InterPro" id="IPR010138">
    <property type="entry name" value="UDP-diacylglucosamine_Hdrlase"/>
</dbReference>
<dbReference type="NCBIfam" id="TIGR01854">
    <property type="entry name" value="lipid_A_lpxH"/>
    <property type="match status" value="1"/>
</dbReference>
<dbReference type="NCBIfam" id="NF003743">
    <property type="entry name" value="PRK05340.1"/>
    <property type="match status" value="1"/>
</dbReference>
<dbReference type="PANTHER" id="PTHR34990:SF1">
    <property type="entry name" value="UDP-2,3-DIACYLGLUCOSAMINE HYDROLASE"/>
    <property type="match status" value="1"/>
</dbReference>
<dbReference type="PANTHER" id="PTHR34990">
    <property type="entry name" value="UDP-2,3-DIACYLGLUCOSAMINE HYDROLASE-RELATED"/>
    <property type="match status" value="1"/>
</dbReference>
<dbReference type="Pfam" id="PF00149">
    <property type="entry name" value="Metallophos"/>
    <property type="match status" value="1"/>
</dbReference>
<dbReference type="SUPFAM" id="SSF56300">
    <property type="entry name" value="Metallo-dependent phosphatases"/>
    <property type="match status" value="1"/>
</dbReference>
<keyword id="KW-0997">Cell inner membrane</keyword>
<keyword id="KW-1003">Cell membrane</keyword>
<keyword id="KW-0378">Hydrolase</keyword>
<keyword id="KW-0441">Lipid A biosynthesis</keyword>
<keyword id="KW-0444">Lipid biosynthesis</keyword>
<keyword id="KW-0443">Lipid metabolism</keyword>
<keyword id="KW-0464">Manganese</keyword>
<keyword id="KW-0472">Membrane</keyword>
<keyword id="KW-0479">Metal-binding</keyword>
<keyword id="KW-1185">Reference proteome</keyword>
<name>LPXH_SHIDS</name>
<proteinExistence type="inferred from homology"/>
<sequence>MATLFIADLHLCVEEPAITAGFLRFLAGEARNADALYILGDLFEAWIGDDDPNPLHRQMAAAIKAVSDSGVPCYFIHGNRDFLLGKRFARESDMTLLPEEKVLELYGRRVLIMHGDTLCTDDAGYQAFRAKVHNPWLQTLFLALPLFVRKRIAARMRANSKEANSSKSLAIMDVNQNAVVSAMEKHQVQWLIHGHTHRPAVHELIANQQPAFRVVLGAWHTEGSMVKVTADDVELIHFPF</sequence>